<reference key="1">
    <citation type="journal article" date="2000" name="Nature">
        <title>Sequence and analysis of chromosome 5 of the plant Arabidopsis thaliana.</title>
        <authorList>
            <person name="Tabata S."/>
            <person name="Kaneko T."/>
            <person name="Nakamura Y."/>
            <person name="Kotani H."/>
            <person name="Kato T."/>
            <person name="Asamizu E."/>
            <person name="Miyajima N."/>
            <person name="Sasamoto S."/>
            <person name="Kimura T."/>
            <person name="Hosouchi T."/>
            <person name="Kawashima K."/>
            <person name="Kohara M."/>
            <person name="Matsumoto M."/>
            <person name="Matsuno A."/>
            <person name="Muraki A."/>
            <person name="Nakayama S."/>
            <person name="Nakazaki N."/>
            <person name="Naruo K."/>
            <person name="Okumura S."/>
            <person name="Shinpo S."/>
            <person name="Takeuchi C."/>
            <person name="Wada T."/>
            <person name="Watanabe A."/>
            <person name="Yamada M."/>
            <person name="Yasuda M."/>
            <person name="Sato S."/>
            <person name="de la Bastide M."/>
            <person name="Huang E."/>
            <person name="Spiegel L."/>
            <person name="Gnoj L."/>
            <person name="O'Shaughnessy A."/>
            <person name="Preston R."/>
            <person name="Habermann K."/>
            <person name="Murray J."/>
            <person name="Johnson D."/>
            <person name="Rohlfing T."/>
            <person name="Nelson J."/>
            <person name="Stoneking T."/>
            <person name="Pepin K."/>
            <person name="Spieth J."/>
            <person name="Sekhon M."/>
            <person name="Armstrong J."/>
            <person name="Becker M."/>
            <person name="Belter E."/>
            <person name="Cordum H."/>
            <person name="Cordes M."/>
            <person name="Courtney L."/>
            <person name="Courtney W."/>
            <person name="Dante M."/>
            <person name="Du H."/>
            <person name="Edwards J."/>
            <person name="Fryman J."/>
            <person name="Haakensen B."/>
            <person name="Lamar E."/>
            <person name="Latreille P."/>
            <person name="Leonard S."/>
            <person name="Meyer R."/>
            <person name="Mulvaney E."/>
            <person name="Ozersky P."/>
            <person name="Riley A."/>
            <person name="Strowmatt C."/>
            <person name="Wagner-McPherson C."/>
            <person name="Wollam A."/>
            <person name="Yoakum M."/>
            <person name="Bell M."/>
            <person name="Dedhia N."/>
            <person name="Parnell L."/>
            <person name="Shah R."/>
            <person name="Rodriguez M."/>
            <person name="Hoon See L."/>
            <person name="Vil D."/>
            <person name="Baker J."/>
            <person name="Kirchoff K."/>
            <person name="Toth K."/>
            <person name="King L."/>
            <person name="Bahret A."/>
            <person name="Miller B."/>
            <person name="Marra M.A."/>
            <person name="Martienssen R."/>
            <person name="McCombie W.R."/>
            <person name="Wilson R.K."/>
            <person name="Murphy G."/>
            <person name="Bancroft I."/>
            <person name="Volckaert G."/>
            <person name="Wambutt R."/>
            <person name="Duesterhoeft A."/>
            <person name="Stiekema W."/>
            <person name="Pohl T."/>
            <person name="Entian K.-D."/>
            <person name="Terryn N."/>
            <person name="Hartley N."/>
            <person name="Bent E."/>
            <person name="Johnson S."/>
            <person name="Langham S.-A."/>
            <person name="McCullagh B."/>
            <person name="Robben J."/>
            <person name="Grymonprez B."/>
            <person name="Zimmermann W."/>
            <person name="Ramsperger U."/>
            <person name="Wedler H."/>
            <person name="Balke K."/>
            <person name="Wedler E."/>
            <person name="Peters S."/>
            <person name="van Staveren M."/>
            <person name="Dirkse W."/>
            <person name="Mooijman P."/>
            <person name="Klein Lankhorst R."/>
            <person name="Weitzenegger T."/>
            <person name="Bothe G."/>
            <person name="Rose M."/>
            <person name="Hauf J."/>
            <person name="Berneiser S."/>
            <person name="Hempel S."/>
            <person name="Feldpausch M."/>
            <person name="Lamberth S."/>
            <person name="Villarroel R."/>
            <person name="Gielen J."/>
            <person name="Ardiles W."/>
            <person name="Bents O."/>
            <person name="Lemcke K."/>
            <person name="Kolesov G."/>
            <person name="Mayer K.F.X."/>
            <person name="Rudd S."/>
            <person name="Schoof H."/>
            <person name="Schueller C."/>
            <person name="Zaccaria P."/>
            <person name="Mewes H.-W."/>
            <person name="Bevan M."/>
            <person name="Fransz P.F."/>
        </authorList>
    </citation>
    <scope>NUCLEOTIDE SEQUENCE [LARGE SCALE GENOMIC DNA]</scope>
    <source>
        <strain>cv. Columbia</strain>
    </source>
</reference>
<reference key="2">
    <citation type="journal article" date="2017" name="Plant J.">
        <title>Araport11: a complete reannotation of the Arabidopsis thaliana reference genome.</title>
        <authorList>
            <person name="Cheng C.Y."/>
            <person name="Krishnakumar V."/>
            <person name="Chan A.P."/>
            <person name="Thibaud-Nissen F."/>
            <person name="Schobel S."/>
            <person name="Town C.D."/>
        </authorList>
    </citation>
    <scope>GENOME REANNOTATION</scope>
    <source>
        <strain>cv. Columbia</strain>
    </source>
</reference>
<reference key="3">
    <citation type="journal article" date="2003" name="Science">
        <title>Empirical analysis of transcriptional activity in the Arabidopsis genome.</title>
        <authorList>
            <person name="Yamada K."/>
            <person name="Lim J."/>
            <person name="Dale J.M."/>
            <person name="Chen H."/>
            <person name="Shinn P."/>
            <person name="Palm C.J."/>
            <person name="Southwick A.M."/>
            <person name="Wu H.C."/>
            <person name="Kim C.J."/>
            <person name="Nguyen M."/>
            <person name="Pham P.K."/>
            <person name="Cheuk R.F."/>
            <person name="Karlin-Newmann G."/>
            <person name="Liu S.X."/>
            <person name="Lam B."/>
            <person name="Sakano H."/>
            <person name="Wu T."/>
            <person name="Yu G."/>
            <person name="Miranda M."/>
            <person name="Quach H.L."/>
            <person name="Tripp M."/>
            <person name="Chang C.H."/>
            <person name="Lee J.M."/>
            <person name="Toriumi M.J."/>
            <person name="Chan M.M."/>
            <person name="Tang C.C."/>
            <person name="Onodera C.S."/>
            <person name="Deng J.M."/>
            <person name="Akiyama K."/>
            <person name="Ansari Y."/>
            <person name="Arakawa T."/>
            <person name="Banh J."/>
            <person name="Banno F."/>
            <person name="Bowser L."/>
            <person name="Brooks S.Y."/>
            <person name="Carninci P."/>
            <person name="Chao Q."/>
            <person name="Choy N."/>
            <person name="Enju A."/>
            <person name="Goldsmith A.D."/>
            <person name="Gurjal M."/>
            <person name="Hansen N.F."/>
            <person name="Hayashizaki Y."/>
            <person name="Johnson-Hopson C."/>
            <person name="Hsuan V.W."/>
            <person name="Iida K."/>
            <person name="Karnes M."/>
            <person name="Khan S."/>
            <person name="Koesema E."/>
            <person name="Ishida J."/>
            <person name="Jiang P.X."/>
            <person name="Jones T."/>
            <person name="Kawai J."/>
            <person name="Kamiya A."/>
            <person name="Meyers C."/>
            <person name="Nakajima M."/>
            <person name="Narusaka M."/>
            <person name="Seki M."/>
            <person name="Sakurai T."/>
            <person name="Satou M."/>
            <person name="Tamse R."/>
            <person name="Vaysberg M."/>
            <person name="Wallender E.K."/>
            <person name="Wong C."/>
            <person name="Yamamura Y."/>
            <person name="Yuan S."/>
            <person name="Shinozaki K."/>
            <person name="Davis R.W."/>
            <person name="Theologis A."/>
            <person name="Ecker J.R."/>
        </authorList>
    </citation>
    <scope>NUCLEOTIDE SEQUENCE [LARGE SCALE MRNA]</scope>
    <source>
        <strain>cv. Columbia</strain>
    </source>
</reference>
<reference key="4">
    <citation type="submission" date="2004-09" db="EMBL/GenBank/DDBJ databases">
        <title>Large-scale analysis of RIKEN Arabidopsis full-length (RAFL) cDNAs.</title>
        <authorList>
            <person name="Totoki Y."/>
            <person name="Seki M."/>
            <person name="Ishida J."/>
            <person name="Nakajima M."/>
            <person name="Enju A."/>
            <person name="Kamiya A."/>
            <person name="Narusaka M."/>
            <person name="Shin-i T."/>
            <person name="Nakagawa M."/>
            <person name="Sakamoto N."/>
            <person name="Oishi K."/>
            <person name="Kohara Y."/>
            <person name="Kobayashi M."/>
            <person name="Toyoda A."/>
            <person name="Sakaki Y."/>
            <person name="Sakurai T."/>
            <person name="Iida K."/>
            <person name="Akiyama K."/>
            <person name="Satou M."/>
            <person name="Toyoda T."/>
            <person name="Konagaya A."/>
            <person name="Carninci P."/>
            <person name="Kawai J."/>
            <person name="Hayashizaki Y."/>
            <person name="Shinozaki K."/>
        </authorList>
    </citation>
    <scope>NUCLEOTIDE SEQUENCE [LARGE SCALE MRNA]</scope>
    <source>
        <strain>cv. Columbia</strain>
    </source>
</reference>
<reference key="5">
    <citation type="journal article" date="2011" name="Plant Physiol.">
        <title>The Mediator complex in plants: structure, phylogeny, and expression profiling of representative genes in a dicot (Arabidopsis) and a monocot (rice) during reproduction and abiotic stress.</title>
        <authorList>
            <person name="Mathur S."/>
            <person name="Vyas S."/>
            <person name="Kapoor S."/>
            <person name="Tyagi A.K."/>
        </authorList>
    </citation>
    <scope>IDENTIFICATION</scope>
    <scope>NOMENCLATURE</scope>
</reference>
<proteinExistence type="evidence at transcript level"/>
<gene>
    <name type="primary">MED19B</name>
    <name type="synonym">MED19_2</name>
    <name type="ordered locus">At5g19480</name>
    <name type="ORF">F7K24.230</name>
</gene>
<feature type="chain" id="PRO_0000419192" description="Probable mediator of RNA polymerase II transcription subunit 19b">
    <location>
        <begin position="1"/>
        <end position="207"/>
    </location>
</feature>
<feature type="region of interest" description="Disordered" evidence="2">
    <location>
        <begin position="99"/>
        <end position="207"/>
    </location>
</feature>
<feature type="compositionally biased region" description="Basic residues" evidence="2">
    <location>
        <begin position="127"/>
        <end position="152"/>
    </location>
</feature>
<feature type="compositionally biased region" description="Basic and acidic residues" evidence="2">
    <location>
        <begin position="153"/>
        <end position="167"/>
    </location>
</feature>
<feature type="compositionally biased region" description="Basic residues" evidence="2">
    <location>
        <begin position="168"/>
        <end position="179"/>
    </location>
</feature>
<name>MD19B_ARATH</name>
<comment type="function">
    <text evidence="1">Component of the Mediator complex, a coactivator involved in the regulated transcription of nearly all RNA polymerase II-dependent genes. Mediator functions as a bridge to convey information from gene-specific regulatory proteins to the basal RNA polymerase II transcription machinery. The Mediator complex, having a compact conformation in its free form, is recruited to promoters by direct interactions with regulatory proteins and serves for the assembly of a functional preinitiation complex with RNA polymerase II and the general transcription factors (By similarity).</text>
</comment>
<comment type="subunit">
    <text evidence="3">Component of the Mediator complex.</text>
</comment>
<comment type="subcellular location">
    <subcellularLocation>
        <location evidence="3">Nucleus</location>
    </subcellularLocation>
</comment>
<comment type="similarity">
    <text evidence="3">Belongs to the plant Mediator complex subunit 19 family.</text>
</comment>
<dbReference type="EMBL" id="AF296837">
    <property type="status" value="NOT_ANNOTATED_CDS"/>
    <property type="molecule type" value="Genomic_DNA"/>
</dbReference>
<dbReference type="EMBL" id="CP002688">
    <property type="protein sequence ID" value="AED92714.1"/>
    <property type="molecule type" value="Genomic_DNA"/>
</dbReference>
<dbReference type="EMBL" id="CP002688">
    <property type="protein sequence ID" value="AED92715.1"/>
    <property type="molecule type" value="Genomic_DNA"/>
</dbReference>
<dbReference type="EMBL" id="CP002688">
    <property type="protein sequence ID" value="ANM69483.1"/>
    <property type="molecule type" value="Genomic_DNA"/>
</dbReference>
<dbReference type="EMBL" id="CP002688">
    <property type="protein sequence ID" value="ANM69484.1"/>
    <property type="molecule type" value="Genomic_DNA"/>
</dbReference>
<dbReference type="EMBL" id="AK175303">
    <property type="protein sequence ID" value="BAD43066.1"/>
    <property type="molecule type" value="mRNA"/>
</dbReference>
<dbReference type="EMBL" id="AK176603">
    <property type="protein sequence ID" value="BAD44366.1"/>
    <property type="molecule type" value="mRNA"/>
</dbReference>
<dbReference type="EMBL" id="BT010517">
    <property type="protein sequence ID" value="AAQ65140.1"/>
    <property type="molecule type" value="mRNA"/>
</dbReference>
<dbReference type="RefSeq" id="NP_001031907.1">
    <property type="nucleotide sequence ID" value="NM_001036830.3"/>
</dbReference>
<dbReference type="RefSeq" id="NP_001331154.1">
    <property type="nucleotide sequence ID" value="NM_001343608.1"/>
</dbReference>
<dbReference type="RefSeq" id="NP_001331155.1">
    <property type="nucleotide sequence ID" value="NM_001343607.1"/>
</dbReference>
<dbReference type="RefSeq" id="NP_197449.1">
    <property type="nucleotide sequence ID" value="NM_121953.3"/>
</dbReference>
<dbReference type="BioGRID" id="17344">
    <property type="interactions" value="1"/>
</dbReference>
<dbReference type="FunCoup" id="Q6NQD9">
    <property type="interactions" value="939"/>
</dbReference>
<dbReference type="IntAct" id="Q6NQD9">
    <property type="interactions" value="1"/>
</dbReference>
<dbReference type="STRING" id="3702.Q6NQD9"/>
<dbReference type="PaxDb" id="3702-AT5G19480.2"/>
<dbReference type="ProteomicsDB" id="238243"/>
<dbReference type="EnsemblPlants" id="AT5G19480.1">
    <property type="protein sequence ID" value="AT5G19480.1"/>
    <property type="gene ID" value="AT5G19480"/>
</dbReference>
<dbReference type="EnsemblPlants" id="AT5G19480.2">
    <property type="protein sequence ID" value="AT5G19480.2"/>
    <property type="gene ID" value="AT5G19480"/>
</dbReference>
<dbReference type="EnsemblPlants" id="AT5G19480.3">
    <property type="protein sequence ID" value="AT5G19480.3"/>
    <property type="gene ID" value="AT5G19480"/>
</dbReference>
<dbReference type="EnsemblPlants" id="AT5G19480.4">
    <property type="protein sequence ID" value="AT5G19480.4"/>
    <property type="gene ID" value="AT5G19480"/>
</dbReference>
<dbReference type="GeneID" id="832068"/>
<dbReference type="Gramene" id="AT5G19480.1">
    <property type="protein sequence ID" value="AT5G19480.1"/>
    <property type="gene ID" value="AT5G19480"/>
</dbReference>
<dbReference type="Gramene" id="AT5G19480.2">
    <property type="protein sequence ID" value="AT5G19480.2"/>
    <property type="gene ID" value="AT5G19480"/>
</dbReference>
<dbReference type="Gramene" id="AT5G19480.3">
    <property type="protein sequence ID" value="AT5G19480.3"/>
    <property type="gene ID" value="AT5G19480"/>
</dbReference>
<dbReference type="Gramene" id="AT5G19480.4">
    <property type="protein sequence ID" value="AT5G19480.4"/>
    <property type="gene ID" value="AT5G19480"/>
</dbReference>
<dbReference type="KEGG" id="ath:AT5G19480"/>
<dbReference type="Araport" id="AT5G19480"/>
<dbReference type="TAIR" id="AT5G19480"/>
<dbReference type="eggNOG" id="ENOG502R8JR">
    <property type="taxonomic scope" value="Eukaryota"/>
</dbReference>
<dbReference type="HOGENOM" id="CLU_078385_1_0_1"/>
<dbReference type="InParanoid" id="Q6NQD9"/>
<dbReference type="OMA" id="PHYEFFG"/>
<dbReference type="PhylomeDB" id="Q6NQD9"/>
<dbReference type="PRO" id="PR:Q6NQD9"/>
<dbReference type="Proteomes" id="UP000006548">
    <property type="component" value="Chromosome 5"/>
</dbReference>
<dbReference type="ExpressionAtlas" id="Q6NQD9">
    <property type="expression patterns" value="baseline and differential"/>
</dbReference>
<dbReference type="GO" id="GO:0016592">
    <property type="term" value="C:mediator complex"/>
    <property type="evidence" value="ECO:0007669"/>
    <property type="project" value="InterPro"/>
</dbReference>
<dbReference type="GO" id="GO:0003712">
    <property type="term" value="F:transcription coregulator activity"/>
    <property type="evidence" value="ECO:0007669"/>
    <property type="project" value="InterPro"/>
</dbReference>
<dbReference type="GO" id="GO:0006357">
    <property type="term" value="P:regulation of transcription by RNA polymerase II"/>
    <property type="evidence" value="ECO:0007669"/>
    <property type="project" value="InterPro"/>
</dbReference>
<dbReference type="InterPro" id="IPR019403">
    <property type="entry name" value="Mediator_Med19_met"/>
</dbReference>
<dbReference type="PANTHER" id="PTHR22536">
    <property type="entry name" value="LUNG CANCER METASTASIS-RELATED LCMR1 PROTEIN"/>
    <property type="match status" value="1"/>
</dbReference>
<dbReference type="PANTHER" id="PTHR22536:SF1">
    <property type="entry name" value="MEDIATOR OF RNA POLYMERASE II TRANSCRIPTION SUBUNIT 19"/>
    <property type="match status" value="1"/>
</dbReference>
<sequence>MESESVKFGGPRELGGALDLITQYKLLPHHEFFCKRSLPESLSDAHYLHNLVGDTEIRKGEGMQLDQLIPNASLSSRDTNARIQPFVLDELKEAFELNDTAPVELPPAEKGAPTTVSKSKSESKDKDRKHRKHKDKKEKDREHKKHKHKHKDRIKDKDKDKDRDKKKEKSGHHDKKRKNNGTEDADDVQRHKKSKHKSSKLDEMGAM</sequence>
<accession>Q6NQD9</accession>
<protein>
    <recommendedName>
        <fullName>Probable mediator of RNA polymerase II transcription subunit 19b</fullName>
    </recommendedName>
</protein>
<keyword id="KW-0539">Nucleus</keyword>
<keyword id="KW-1185">Reference proteome</keyword>
<keyword id="KW-0804">Transcription</keyword>
<keyword id="KW-0805">Transcription regulation</keyword>
<evidence type="ECO:0000250" key="1"/>
<evidence type="ECO:0000256" key="2">
    <source>
        <dbReference type="SAM" id="MobiDB-lite"/>
    </source>
</evidence>
<evidence type="ECO:0000305" key="3"/>
<organism>
    <name type="scientific">Arabidopsis thaliana</name>
    <name type="common">Mouse-ear cress</name>
    <dbReference type="NCBI Taxonomy" id="3702"/>
    <lineage>
        <taxon>Eukaryota</taxon>
        <taxon>Viridiplantae</taxon>
        <taxon>Streptophyta</taxon>
        <taxon>Embryophyta</taxon>
        <taxon>Tracheophyta</taxon>
        <taxon>Spermatophyta</taxon>
        <taxon>Magnoliopsida</taxon>
        <taxon>eudicotyledons</taxon>
        <taxon>Gunneridae</taxon>
        <taxon>Pentapetalae</taxon>
        <taxon>rosids</taxon>
        <taxon>malvids</taxon>
        <taxon>Brassicales</taxon>
        <taxon>Brassicaceae</taxon>
        <taxon>Camelineae</taxon>
        <taxon>Arabidopsis</taxon>
    </lineage>
</organism>